<feature type="chain" id="PRO_0000355927" description="Maturase K">
    <location>
        <begin position="1"/>
        <end position="521"/>
    </location>
</feature>
<protein>
    <recommendedName>
        <fullName evidence="1">Maturase K</fullName>
    </recommendedName>
    <alternativeName>
        <fullName evidence="1">Intron maturase</fullName>
    </alternativeName>
</protein>
<evidence type="ECO:0000255" key="1">
    <source>
        <dbReference type="HAMAP-Rule" id="MF_01390"/>
    </source>
</evidence>
<evidence type="ECO:0000305" key="2"/>
<sequence length="521" mass="61950">MEDFKIDLQLPERSQQHNFIYPLLFQEYIYALVNDRDLKRSISFANIGYEKKFRFQIVKRLINRMYKQIHWTTYFSNYSNKRKIYGLIKSLYYKLLSAGFSFLFEIPFSFKFISERKKILKSQNLRSILSIFPFFEDNFSHLKYVLDLLIPNPPHPEILVQKIRSWVQDASSLHLLQFFLQEFCSVKSLITTNKSKRNERFLFLLYNSYVCEYESFFLFLRNQSLHLGSISFVTLFERNIFYGKIECFVELFVQDSQANLRLFKDPDPSMHYARYCGKSILASNGGLLLMPKWQYYIVNFWQCYFYLWFDTERINLSQIASHPFYLMDYISSIAQTPSMVRSKMLENSFLIKNDMKIFDTFVPIIPIIGSLAKAKFCNLLGNPISKPVWSDFSDSDIIERFGRICRNLFHYYSGSSKKRSLYQIKYILRLSCARTLARKHKSTVRAFLQSLGPKFLEKFFTSEEQIIFLTFPNASFNLRGVSKGRIWYFDIVCINEQANFHVDSKFELKGYPRLKPCAMKN</sequence>
<comment type="function">
    <text evidence="1">Usually encoded in the trnK tRNA gene intron. Probably assists in splicing its own and other chloroplast group II introns.</text>
</comment>
<comment type="subcellular location">
    <subcellularLocation>
        <location>Plastid</location>
    </subcellularLocation>
</comment>
<comment type="similarity">
    <text evidence="1">Belongs to the intron maturase 2 family. MatK subfamily.</text>
</comment>
<comment type="caution">
    <text evidence="2">Young tissue from this organism is photosynthetic and contains some thylakoids, although the photosynthetic activity does not exceed the light compensation point.</text>
</comment>
<name>MATK_CUSEX</name>
<gene>
    <name evidence="1" type="primary">matK</name>
</gene>
<accession>A8W3A6</accession>
<geneLocation type="plastid"/>
<reference key="1">
    <citation type="journal article" date="2007" name="BMC Plant Biol.">
        <title>Complete plastid genome sequences suggest strong selection for retention of photosynthetic genes in the parasitic plant genus Cuscuta.</title>
        <authorList>
            <person name="McNeal J.R."/>
            <person name="Kuehl J.V."/>
            <person name="Boore J.L."/>
            <person name="dePamphilis C.W."/>
        </authorList>
    </citation>
    <scope>NUCLEOTIDE SEQUENCE [LARGE SCALE GENOMIC DNA]</scope>
</reference>
<dbReference type="EMBL" id="EU189132">
    <property type="protein sequence ID" value="ABW83677.1"/>
    <property type="molecule type" value="Genomic_DNA"/>
</dbReference>
<dbReference type="RefSeq" id="YP_001542513.1">
    <property type="nucleotide sequence ID" value="NC_009963.1"/>
</dbReference>
<dbReference type="GeneID" id="5729654"/>
<dbReference type="GO" id="GO:0009507">
    <property type="term" value="C:chloroplast"/>
    <property type="evidence" value="ECO:0007669"/>
    <property type="project" value="UniProtKB-UniRule"/>
</dbReference>
<dbReference type="GO" id="GO:0003723">
    <property type="term" value="F:RNA binding"/>
    <property type="evidence" value="ECO:0007669"/>
    <property type="project" value="UniProtKB-KW"/>
</dbReference>
<dbReference type="GO" id="GO:0006397">
    <property type="term" value="P:mRNA processing"/>
    <property type="evidence" value="ECO:0007669"/>
    <property type="project" value="UniProtKB-KW"/>
</dbReference>
<dbReference type="GO" id="GO:0008380">
    <property type="term" value="P:RNA splicing"/>
    <property type="evidence" value="ECO:0007669"/>
    <property type="project" value="UniProtKB-UniRule"/>
</dbReference>
<dbReference type="GO" id="GO:0008033">
    <property type="term" value="P:tRNA processing"/>
    <property type="evidence" value="ECO:0007669"/>
    <property type="project" value="UniProtKB-KW"/>
</dbReference>
<dbReference type="HAMAP" id="MF_01390">
    <property type="entry name" value="MatK"/>
    <property type="match status" value="1"/>
</dbReference>
<dbReference type="InterPro" id="IPR024937">
    <property type="entry name" value="Domain_X"/>
</dbReference>
<dbReference type="InterPro" id="IPR002866">
    <property type="entry name" value="Maturase_MatK"/>
</dbReference>
<dbReference type="InterPro" id="IPR024942">
    <property type="entry name" value="Maturase_MatK_N"/>
</dbReference>
<dbReference type="PANTHER" id="PTHR34811">
    <property type="entry name" value="MATURASE K"/>
    <property type="match status" value="1"/>
</dbReference>
<dbReference type="PANTHER" id="PTHR34811:SF1">
    <property type="entry name" value="MATURASE K"/>
    <property type="match status" value="1"/>
</dbReference>
<dbReference type="Pfam" id="PF01348">
    <property type="entry name" value="Intron_maturas2"/>
    <property type="match status" value="1"/>
</dbReference>
<dbReference type="Pfam" id="PF01824">
    <property type="entry name" value="MatK_N"/>
    <property type="match status" value="1"/>
</dbReference>
<keyword id="KW-0507">mRNA processing</keyword>
<keyword id="KW-0934">Plastid</keyword>
<keyword id="KW-0694">RNA-binding</keyword>
<keyword id="KW-0819">tRNA processing</keyword>
<organism>
    <name type="scientific">Cuscuta exaltata</name>
    <name type="common">Tall dodder</name>
    <dbReference type="NCBI Taxonomy" id="476139"/>
    <lineage>
        <taxon>Eukaryota</taxon>
        <taxon>Viridiplantae</taxon>
        <taxon>Streptophyta</taxon>
        <taxon>Embryophyta</taxon>
        <taxon>Tracheophyta</taxon>
        <taxon>Spermatophyta</taxon>
        <taxon>Magnoliopsida</taxon>
        <taxon>eudicotyledons</taxon>
        <taxon>Gunneridae</taxon>
        <taxon>Pentapetalae</taxon>
        <taxon>asterids</taxon>
        <taxon>lamiids</taxon>
        <taxon>Solanales</taxon>
        <taxon>Convolvulaceae</taxon>
        <taxon>Cuscuteae</taxon>
        <taxon>Cuscuta</taxon>
        <taxon>Cuscuta subgen. Monogynella</taxon>
    </lineage>
</organism>
<proteinExistence type="inferred from homology"/>